<proteinExistence type="evidence at protein level"/>
<reference key="1">
    <citation type="journal article" date="1995" name="Arterioscler. Thromb. Vasc. Biol.">
        <title>Functional properties of human vascular endothelial cadherin (7B4/cadherin-5), an endothelium-specific cadherin.</title>
        <authorList>
            <person name="Breviario F."/>
            <person name="Caveda L."/>
            <person name="Corada M."/>
            <person name="Martin-Padura I."/>
            <person name="Navarro P."/>
            <person name="Golay J."/>
            <person name="Introna M."/>
            <person name="Gulino D."/>
            <person name="Lampugnani M.G."/>
            <person name="Dejana E."/>
        </authorList>
    </citation>
    <scope>NUCLEOTIDE SEQUENCE [MRNA] (ISOFORM 1)</scope>
    <scope>VARIANT THR-517</scope>
    <source>
        <tissue>Endothelial cell</tissue>
    </source>
</reference>
<reference key="2">
    <citation type="journal article" date="1997" name="Microcirculation">
        <title>Vascular endothelial cadherin (VE-cadherin): cloning and role in endothelial cell-cell adhesion.</title>
        <authorList>
            <person name="Ali J."/>
            <person name="Liao F."/>
            <person name="Martens E."/>
            <person name="Muller W.A."/>
        </authorList>
    </citation>
    <scope>NUCLEOTIDE SEQUENCE [MRNA] (ISOFORM 1)</scope>
    <source>
        <tissue>Placenta</tissue>
    </source>
</reference>
<reference key="3">
    <citation type="journal article" date="2000" name="Biochem. J.">
        <title>Identification of three human type-II classic cadherins and frequent heterophilic interactions between different subclasses of type-II classic cadherins.</title>
        <authorList>
            <person name="Shimoyama Y."/>
            <person name="Tsujimoto G."/>
            <person name="Kitajima M."/>
            <person name="Natori M."/>
        </authorList>
    </citation>
    <scope>NUCLEOTIDE SEQUENCE [MRNA] (ISOFORM 1)</scope>
    <scope>FUNCTION</scope>
    <scope>VARIANT THR-517</scope>
</reference>
<reference key="4">
    <citation type="journal article" date="2004" name="Genome Res.">
        <title>The status, quality, and expansion of the NIH full-length cDNA project: the Mammalian Gene Collection (MGC).</title>
        <authorList>
            <consortium name="The MGC Project Team"/>
        </authorList>
    </citation>
    <scope>NUCLEOTIDE SEQUENCE [LARGE SCALE MRNA] (ISOFORM 2)</scope>
    <scope>VARIANT THR-517</scope>
</reference>
<reference key="5">
    <citation type="journal article" date="1991" name="Cell Regul.">
        <title>Diversity of the cadherin family: evidence for eight new cadherins in nervous tissue.</title>
        <authorList>
            <person name="Suzuki S."/>
            <person name="Sano K."/>
            <person name="Tanihara H."/>
        </authorList>
    </citation>
    <scope>NUCLEOTIDE SEQUENCE [MRNA] OF 5-784 (ISOFORM 1)</scope>
    <scope>TISSUE SPECIFICITY</scope>
    <source>
        <tissue>Brain</tissue>
    </source>
</reference>
<reference key="6">
    <citation type="journal article" date="1992" name="J. Cell Biol.">
        <title>A novel endothelial-specific membrane protein is a marker of cell-cell contacts.</title>
        <authorList>
            <person name="Lampugnani M.G."/>
            <person name="Resnati M."/>
            <person name="Raiteri M."/>
            <person name="Pigott R."/>
            <person name="Pisacane A."/>
            <person name="Houen G."/>
            <person name="Ruco L.P."/>
            <person name="Dejana E."/>
        </authorList>
    </citation>
    <scope>PARTIAL PROTEIN SEQUENCE</scope>
    <source>
        <tissue>Endothelial cell</tissue>
    </source>
</reference>
<reference key="7">
    <citation type="journal article" date="2005" name="J. Biol. Chem.">
        <title>G alpha12 interaction with alphaSNAP induces VE-cadherin localization at endothelial junctions and regulates barrier function.</title>
        <authorList>
            <person name="Andreeva A.V."/>
            <person name="Kutuzov M.A."/>
            <person name="Vaiskunaite R."/>
            <person name="Profirovic J."/>
            <person name="Meigs T.E."/>
            <person name="Predescu S."/>
            <person name="Malik A.B."/>
            <person name="Voyno-Yasenetskaya T."/>
        </authorList>
    </citation>
    <scope>SUBCELLULAR LOCATION</scope>
</reference>
<reference key="8">
    <citation type="journal article" date="2005" name="J. Proteome Res.">
        <title>Human plasma N-glycoproteome analysis by immunoaffinity subtraction, hydrazide chemistry, and mass spectrometry.</title>
        <authorList>
            <person name="Liu T."/>
            <person name="Qian W.-J."/>
            <person name="Gritsenko M.A."/>
            <person name="Camp D.G. II"/>
            <person name="Monroe M.E."/>
            <person name="Moore R.J."/>
            <person name="Smith R.D."/>
        </authorList>
    </citation>
    <scope>GLYCOSYLATION [LARGE SCALE ANALYSIS] AT ASN-112; ASN-442; ASN-523 AND ASN-535</scope>
    <source>
        <tissue>Plasma</tissue>
    </source>
</reference>
<reference key="9">
    <citation type="journal article" date="2009" name="Mol. Cell. Proteomics">
        <title>A strategy for precise and large scale identification of core fucosylated glycoproteins.</title>
        <authorList>
            <person name="Jia W."/>
            <person name="Lu Z."/>
            <person name="Fu Y."/>
            <person name="Wang H.P."/>
            <person name="Wang L.H."/>
            <person name="Chi H."/>
            <person name="Yuan Z.F."/>
            <person name="Zheng Z.B."/>
            <person name="Song L.N."/>
            <person name="Han H.H."/>
            <person name="Liang Y.M."/>
            <person name="Wang J.L."/>
            <person name="Cai Y."/>
            <person name="Zhang Y.K."/>
            <person name="Deng Y.L."/>
            <person name="Ying W.T."/>
            <person name="He S.M."/>
            <person name="Qian X.H."/>
        </authorList>
    </citation>
    <scope>GLYCOSYLATION AT ASN-61; ASN-112 AND ASN-442</scope>
</reference>
<reference key="10">
    <citation type="journal article" date="2010" name="J. Biol. Chem.">
        <title>Cell-cell contact formation governs Ca2+ signaling by TRPC4 in the vascular endothelium: evidence for a regulatory TRPC4-beta-catenin interaction.</title>
        <authorList>
            <person name="Graziani A."/>
            <person name="Poteser M."/>
            <person name="Heupel W.M."/>
            <person name="Schleifer H."/>
            <person name="Krenn M."/>
            <person name="Drenckhahn D."/>
            <person name="Romanin C."/>
            <person name="Baumgartner W."/>
            <person name="Groschner K."/>
        </authorList>
    </citation>
    <scope>INTERACTION WITH TRPC4</scope>
</reference>
<reference key="11">
    <citation type="journal article" date="2010" name="J. Cell Sci.">
        <title>CCM1 regulates vascular-lumen organization by inducing endothelial polarity.</title>
        <authorList>
            <person name="Lampugnani M.G."/>
            <person name="Orsenigo F."/>
            <person name="Rudini N."/>
            <person name="Maddaluno L."/>
            <person name="Boulday G."/>
            <person name="Chapon F."/>
            <person name="Dejana E."/>
        </authorList>
    </citation>
    <scope>FUNCTION</scope>
    <scope>SUBCELLULAR LOCATION</scope>
    <scope>INTERACTION WITH KRIT1</scope>
</reference>
<reference key="12">
    <citation type="journal article" date="2011" name="Blood">
        <title>Endothelial reticulon-4B (Nogo-B) regulates ICAM-1-mediated leukocyte transmigration and acute inflammation.</title>
        <authorList>
            <person name="Di Lorenzo A."/>
            <person name="Manes T.D."/>
            <person name="Davalos A."/>
            <person name="Wright P.L."/>
            <person name="Sessa W.C."/>
        </authorList>
    </citation>
    <scope>SUBCELLULAR LOCATION</scope>
    <scope>INTERACTION WITH RTN4</scope>
</reference>
<reference key="13">
    <citation type="journal article" date="2011" name="J. Mol. Biol.">
        <title>Structure and binding mechanism of vascular endothelial cadherin: a divergent classical cadherin.</title>
        <authorList>
            <person name="Brasch J."/>
            <person name="Harrison O.J."/>
            <person name="Ahlsen G."/>
            <person name="Carnally S.M."/>
            <person name="Henderson R.M."/>
            <person name="Honig B."/>
            <person name="Shapiro L."/>
        </authorList>
    </citation>
    <scope>FUNCTION</scope>
    <scope>GLYCOSYLATION AT ASN-61; ASN-112; ASN-157; ASN-362 AND ASN-442</scope>
</reference>
<reference key="14">
    <citation type="journal article" date="2016" name="Angiogenesis">
        <title>A non-canonical role for desmoglein-2 in endothelial cells: implications for neoangiogenesis.</title>
        <authorList>
            <person name="Ebert L.M."/>
            <person name="Tan L.Y."/>
            <person name="Johan M.Z."/>
            <person name="Min K.K."/>
            <person name="Cockshell M.P."/>
            <person name="Parham K.A."/>
            <person name="Betterman K.L."/>
            <person name="Szeto P."/>
            <person name="Boyle S."/>
            <person name="Silva L."/>
            <person name="Peng A."/>
            <person name="Zhang Y."/>
            <person name="Ruszkiewicz A."/>
            <person name="Zannettino A.C."/>
            <person name="Gronthos S."/>
            <person name="Koblar S."/>
            <person name="Harvey N.L."/>
            <person name="Lopez A.F."/>
            <person name="Shackleton M."/>
            <person name="Bonder C.S."/>
        </authorList>
    </citation>
    <scope>SUBCELLULAR LOCATION</scope>
    <scope>TISSUE SPECIFICITY</scope>
</reference>
<reference key="15">
    <citation type="journal article" date="2016" name="Mol. Biol. Cell">
        <title>VE-cadherin interacts with cell polarity protein Pals1 to regulate vascular lumen formation.</title>
        <authorList>
            <person name="Brinkmann B.F."/>
            <person name="Steinbacher T."/>
            <person name="Hartmann C."/>
            <person name="Kummer D."/>
            <person name="Pajonczyk D."/>
            <person name="Mirzapourshafiyi F."/>
            <person name="Nakayama M."/>
            <person name="Weide T."/>
            <person name="Gerke V."/>
            <person name="Ebnet K."/>
        </authorList>
    </citation>
    <scope>INTERACTION WITH PALS1</scope>
</reference>
<keyword id="KW-0025">Alternative splicing</keyword>
<keyword id="KW-0106">Calcium</keyword>
<keyword id="KW-0130">Cell adhesion</keyword>
<keyword id="KW-0965">Cell junction</keyword>
<keyword id="KW-1003">Cell membrane</keyword>
<keyword id="KW-0165">Cleavage on pair of basic residues</keyword>
<keyword id="KW-0963">Cytoplasm</keyword>
<keyword id="KW-0903">Direct protein sequencing</keyword>
<keyword id="KW-0325">Glycoprotein</keyword>
<keyword id="KW-0472">Membrane</keyword>
<keyword id="KW-0479">Metal-binding</keyword>
<keyword id="KW-0597">Phosphoprotein</keyword>
<keyword id="KW-1267">Proteomics identification</keyword>
<keyword id="KW-1185">Reference proteome</keyword>
<keyword id="KW-0677">Repeat</keyword>
<keyword id="KW-0732">Signal</keyword>
<keyword id="KW-0812">Transmembrane</keyword>
<keyword id="KW-1133">Transmembrane helix</keyword>
<evidence type="ECO:0000250" key="1"/>
<evidence type="ECO:0000250" key="2">
    <source>
        <dbReference type="UniProtKB" id="P55284"/>
    </source>
</evidence>
<evidence type="ECO:0000250" key="3">
    <source>
        <dbReference type="UniProtKB" id="Q8AYD0"/>
    </source>
</evidence>
<evidence type="ECO:0000255" key="4"/>
<evidence type="ECO:0000255" key="5">
    <source>
        <dbReference type="PROSITE-ProRule" id="PRU00043"/>
    </source>
</evidence>
<evidence type="ECO:0000269" key="6">
    <source>
    </source>
</evidence>
<evidence type="ECO:0000269" key="7">
    <source>
    </source>
</evidence>
<evidence type="ECO:0000269" key="8">
    <source>
    </source>
</evidence>
<evidence type="ECO:0000269" key="9">
    <source>
    </source>
</evidence>
<evidence type="ECO:0000269" key="10">
    <source>
    </source>
</evidence>
<evidence type="ECO:0000269" key="11">
    <source>
    </source>
</evidence>
<evidence type="ECO:0000269" key="12">
    <source>
    </source>
</evidence>
<evidence type="ECO:0000269" key="13">
    <source>
    </source>
</evidence>
<evidence type="ECO:0000269" key="14">
    <source>
    </source>
</evidence>
<evidence type="ECO:0000269" key="15">
    <source>
    </source>
</evidence>
<evidence type="ECO:0000269" key="16">
    <source>
    </source>
</evidence>
<evidence type="ECO:0000269" key="17">
    <source>
    </source>
</evidence>
<evidence type="ECO:0000269" key="18">
    <source>
    </source>
</evidence>
<evidence type="ECO:0000303" key="19">
    <source>
    </source>
</evidence>
<evidence type="ECO:0000303" key="20">
    <source>
    </source>
</evidence>
<evidence type="ECO:0000303" key="21">
    <source>
    </source>
</evidence>
<evidence type="ECO:0000305" key="22"/>
<evidence type="ECO:0000305" key="23">
    <source>
    </source>
</evidence>
<evidence type="ECO:0000312" key="24">
    <source>
        <dbReference type="HGNC" id="HGNC:1764"/>
    </source>
</evidence>
<organism>
    <name type="scientific">Homo sapiens</name>
    <name type="common">Human</name>
    <dbReference type="NCBI Taxonomy" id="9606"/>
    <lineage>
        <taxon>Eukaryota</taxon>
        <taxon>Metazoa</taxon>
        <taxon>Chordata</taxon>
        <taxon>Craniata</taxon>
        <taxon>Vertebrata</taxon>
        <taxon>Euteleostomi</taxon>
        <taxon>Mammalia</taxon>
        <taxon>Eutheria</taxon>
        <taxon>Euarchontoglires</taxon>
        <taxon>Primates</taxon>
        <taxon>Haplorrhini</taxon>
        <taxon>Catarrhini</taxon>
        <taxon>Hominidae</taxon>
        <taxon>Homo</taxon>
    </lineage>
</organism>
<gene>
    <name evidence="24" type="primary">CDH5</name>
</gene>
<comment type="function">
    <text evidence="2 3 6 12 15">Cadherins are calcium-dependent cell adhesion proteins (By similarity). They preferentially interact with themselves in a homophilic manner in connecting cells; cadherins may thus contribute to the sorting of heterogeneous cell types (PubMed:21269602). This cadherin may play a important role in endothelial cell biology through control of the cohesion and organization of the intercellular junctions (By similarity). It associates with alpha-catenin forming a link to the cytoskeleton (PubMed:10861224). Plays a role in coupling actin fibers to cell junctions in endothelial cells, via acting as a cell junctional complex anchor for AMOTL2 and MAGI1 (By similarity). Acts in concert with KRIT1 and PALS1 to establish and maintain correct endothelial cell polarity and vascular lumen (By similarity). These effects are mediated by recruitment and activation of the Par polarity complex and RAP1B (PubMed:20332120). Required for activation of PRKCZ and for the localization of phosphorylated PRKCZ, PARD3, TIAM1 and RAP1B to the cell junction (PubMed:20332120). Associates with CTNND1/p120-catenin to control CADH5 endocytosis (By similarity).</text>
</comment>
<comment type="subunit">
    <text evidence="2 11 12 14 17">Part of a complex composed of AMOTL2, MAGI1 and CDH5, within the complex AMOTL2 acts as a scaffold protein for the interaction of MAGI1 with CDH5 (By similarity). The complex is required for coupling actin fibers to cell junctions in endothelial cells (By similarity). Within the complex AMOTL2 (via its N-terminus) interacts with CDH5 (By similarity). Interacts (via cadherin 5 domain) with PTPRB (By similarity). Interacts with TRPC4 (PubMed:19996314). Interacts with KRIT1 (PubMed:20332120). Interacts with PARD3 (By similarity). Interacts with RTN4 (isoform B) (PubMed:21183689). Interacts with PALS1; the interaction promotes PALS1 localization to cell junctions and is required for CDH5-mediated vascular lumen formation and endothelial cell (PubMed:27466317). Interacts with CTNND1/p120-catenin; the interaction controls CADH5 endocytosis (By similarity).</text>
</comment>
<comment type="interaction">
    <interactant intactId="EBI-2903122">
        <id>P33151</id>
    </interactant>
    <interactant intactId="EBI-491549">
        <id>P35222</id>
        <label>CTNNB1</label>
    </interactant>
    <organismsDiffer>false</organismsDiffer>
    <experiments>8</experiments>
</comment>
<comment type="interaction">
    <interactant intactId="EBI-2903122">
        <id>P33151</id>
    </interactant>
    <interactant intactId="EBI-81968">
        <id>Q8TEW0</id>
        <label>PARD3</label>
    </interactant>
    <organismsDiffer>false</organismsDiffer>
    <experiments>5</experiments>
</comment>
<comment type="interaction">
    <interactant intactId="EBI-2903122">
        <id>P33151</id>
    </interactant>
    <interactant intactId="EBI-81876">
        <id>Q9NPB6</id>
        <label>PARD6A</label>
    </interactant>
    <organismsDiffer>false</organismsDiffer>
    <experiments>4</experiments>
</comment>
<comment type="interaction">
    <interactant intactId="EBI-2903122">
        <id>P33151</id>
    </interactant>
    <interactant intactId="EBI-721244">
        <id>P23381</id>
        <label>WARS1</label>
    </interactant>
    <organismsDiffer>false</organismsDiffer>
    <experiments>4</experiments>
</comment>
<comment type="subcellular location">
    <subcellularLocation>
        <location evidence="12 14 16">Cell junction</location>
        <location evidence="12 14 16">Adherens junction</location>
    </subcellularLocation>
    <subcellularLocation>
        <location evidence="8 23">Cell membrane</location>
        <topology evidence="23">Single-pass type I membrane protein</topology>
    </subcellularLocation>
    <subcellularLocation>
        <location evidence="2">Cytoplasm</location>
    </subcellularLocation>
    <text evidence="12">Found at cell-cell boundaries and probably at cell-matrix boundaries. KRIT1 and CDH5 reciprocally regulate their localization to endothelial cell-cell junctions.</text>
</comment>
<comment type="alternative products">
    <event type="alternative splicing"/>
    <isoform>
        <id>P33151-1</id>
        <name>1</name>
        <sequence type="displayed"/>
    </isoform>
    <isoform>
        <id>P33151-2</id>
        <name>2</name>
        <sequence type="described" ref="VSP_053861"/>
    </isoform>
</comment>
<comment type="tissue specificity">
    <text evidence="13 16">Expressed in endothelial cells (at protein level) (PubMed:27338829). Expressed in the brain (PubMed:2059658).</text>
</comment>
<comment type="domain">
    <text evidence="1">Three calcium ions are usually bound at the interface of each cadherin domain and rigidify the connections, imparting a strong curvature to the full-length ectodomain.</text>
</comment>
<comment type="PTM">
    <text evidence="1">Phosphorylated on tyrosine residues by KDR/VEGFR-2. Dephosphorylated by PTPRB (By similarity).</text>
</comment>
<comment type="PTM">
    <text evidence="9 10 15">O-glycosylated.</text>
</comment>
<protein>
    <recommendedName>
        <fullName evidence="24">Cadherin-5</fullName>
    </recommendedName>
    <alternativeName>
        <fullName evidence="20">7B4 antigen</fullName>
    </alternativeName>
    <alternativeName>
        <fullName evidence="20">Vascular endothelial cadherin</fullName>
        <shortName evidence="21">VE-cadherin</shortName>
    </alternativeName>
    <cdAntigenName>CD144</cdAntigenName>
</protein>
<name>CADH5_HUMAN</name>
<dbReference type="EMBL" id="X79981">
    <property type="protein sequence ID" value="CAA56306.1"/>
    <property type="molecule type" value="mRNA"/>
</dbReference>
<dbReference type="EMBL" id="U84722">
    <property type="protein sequence ID" value="AAB41796.1"/>
    <property type="molecule type" value="mRNA"/>
</dbReference>
<dbReference type="EMBL" id="AB035304">
    <property type="protein sequence ID" value="BAA87418.1"/>
    <property type="molecule type" value="mRNA"/>
</dbReference>
<dbReference type="EMBL" id="BC096363">
    <property type="protein sequence ID" value="AAH96363.1"/>
    <property type="molecule type" value="mRNA"/>
</dbReference>
<dbReference type="EMBL" id="BC096364">
    <property type="protein sequence ID" value="AAH96364.3"/>
    <property type="molecule type" value="mRNA"/>
</dbReference>
<dbReference type="EMBL" id="BC117520">
    <property type="protein sequence ID" value="AAI17521.1"/>
    <property type="molecule type" value="mRNA"/>
</dbReference>
<dbReference type="EMBL" id="X59796">
    <property type="protein sequence ID" value="CAA42468.1"/>
    <property type="molecule type" value="mRNA"/>
</dbReference>
<dbReference type="CCDS" id="CCDS10804.1">
    <molecule id="P33151-1"/>
</dbReference>
<dbReference type="PIR" id="S49893">
    <property type="entry name" value="IJHUC5"/>
</dbReference>
<dbReference type="RefSeq" id="NP_001786.2">
    <molecule id="P33151-1"/>
    <property type="nucleotide sequence ID" value="NM_001795.5"/>
</dbReference>
<dbReference type="RefSeq" id="XP_047289427.1">
    <molecule id="P33151-1"/>
    <property type="nucleotide sequence ID" value="XM_047433471.1"/>
</dbReference>
<dbReference type="SMR" id="P33151"/>
<dbReference type="BioGRID" id="107438">
    <property type="interactions" value="109"/>
</dbReference>
<dbReference type="CORUM" id="P33151"/>
<dbReference type="DIP" id="DIP-41172N"/>
<dbReference type="FunCoup" id="P33151">
    <property type="interactions" value="512"/>
</dbReference>
<dbReference type="IntAct" id="P33151">
    <property type="interactions" value="91"/>
</dbReference>
<dbReference type="MINT" id="P33151"/>
<dbReference type="STRING" id="9606.ENSP00000497290"/>
<dbReference type="DrugBank" id="DB05685">
    <property type="generic name" value="FX06"/>
</dbReference>
<dbReference type="DrugBank" id="DB00480">
    <property type="generic name" value="Lenalidomide"/>
</dbReference>
<dbReference type="GlyConnect" id="617">
    <property type="glycosylation" value="30 N-Linked glycans (4 sites)"/>
</dbReference>
<dbReference type="GlyCosmos" id="P33151">
    <property type="glycosylation" value="7 sites, 42 glycans"/>
</dbReference>
<dbReference type="GlyGen" id="P33151">
    <property type="glycosylation" value="8 sites, 80 N-linked glycans (6 sites), 1 O-linked glycan (1 site)"/>
</dbReference>
<dbReference type="iPTMnet" id="P33151"/>
<dbReference type="PhosphoSitePlus" id="P33151"/>
<dbReference type="BioMuta" id="CDH5"/>
<dbReference type="DMDM" id="322510142"/>
<dbReference type="jPOST" id="P33151"/>
<dbReference type="MassIVE" id="P33151"/>
<dbReference type="PaxDb" id="9606-ENSP00000344115"/>
<dbReference type="PeptideAtlas" id="P33151"/>
<dbReference type="ProteomicsDB" id="54900">
    <molecule id="P33151-1"/>
</dbReference>
<dbReference type="TopDownProteomics" id="P33151-1">
    <molecule id="P33151-1"/>
</dbReference>
<dbReference type="Antibodypedia" id="3717">
    <property type="antibodies" value="1286 antibodies from 45 providers"/>
</dbReference>
<dbReference type="DNASU" id="1003"/>
<dbReference type="Ensembl" id="ENST00000341529.8">
    <molecule id="P33151-1"/>
    <property type="protein sequence ID" value="ENSP00000344115.3"/>
    <property type="gene ID" value="ENSG00000179776.20"/>
</dbReference>
<dbReference type="Ensembl" id="ENST00000649567.1">
    <molecule id="P33151-1"/>
    <property type="protein sequence ID" value="ENSP00000497290.1"/>
    <property type="gene ID" value="ENSG00000179776.20"/>
</dbReference>
<dbReference type="GeneID" id="1003"/>
<dbReference type="KEGG" id="hsa:1003"/>
<dbReference type="MANE-Select" id="ENST00000341529.8">
    <property type="protein sequence ID" value="ENSP00000344115.3"/>
    <property type="RefSeq nucleotide sequence ID" value="NM_001795.5"/>
    <property type="RefSeq protein sequence ID" value="NP_001786.2"/>
</dbReference>
<dbReference type="UCSC" id="uc002eom.5">
    <molecule id="P33151-1"/>
    <property type="organism name" value="human"/>
</dbReference>
<dbReference type="AGR" id="HGNC:1764"/>
<dbReference type="CTD" id="1003"/>
<dbReference type="DisGeNET" id="1003"/>
<dbReference type="GeneCards" id="CDH5"/>
<dbReference type="HGNC" id="HGNC:1764">
    <property type="gene designation" value="CDH5"/>
</dbReference>
<dbReference type="HPA" id="ENSG00000179776">
    <property type="expression patterns" value="Tissue enhanced (placenta)"/>
</dbReference>
<dbReference type="MIM" id="601120">
    <property type="type" value="gene"/>
</dbReference>
<dbReference type="neXtProt" id="NX_P33151"/>
<dbReference type="OpenTargets" id="ENSG00000179776"/>
<dbReference type="PharmGKB" id="PA26301"/>
<dbReference type="VEuPathDB" id="HostDB:ENSG00000179776"/>
<dbReference type="eggNOG" id="KOG3594">
    <property type="taxonomic scope" value="Eukaryota"/>
</dbReference>
<dbReference type="GeneTree" id="ENSGT00940000160587"/>
<dbReference type="HOGENOM" id="CLU_005284_3_2_1"/>
<dbReference type="InParanoid" id="P33151"/>
<dbReference type="OMA" id="DCPIGIN"/>
<dbReference type="OrthoDB" id="6252479at2759"/>
<dbReference type="PAN-GO" id="P33151">
    <property type="GO annotations" value="12 GO annotations based on evolutionary models"/>
</dbReference>
<dbReference type="PhylomeDB" id="P33151"/>
<dbReference type="TreeFam" id="TF329887"/>
<dbReference type="PathwayCommons" id="P33151"/>
<dbReference type="Reactome" id="R-HSA-418990">
    <property type="pathway name" value="Adherens junctions interactions"/>
</dbReference>
<dbReference type="Reactome" id="R-HSA-5218920">
    <property type="pathway name" value="VEGFR2 mediated vascular permeability"/>
</dbReference>
<dbReference type="Reactome" id="R-HSA-9856530">
    <property type="pathway name" value="High laminar flow shear stress activates signaling by PIEZO1 and PECAM1:CDH5:KDR in endothelial cells"/>
</dbReference>
<dbReference type="SignaLink" id="P33151"/>
<dbReference type="SIGNOR" id="P33151"/>
<dbReference type="BioGRID-ORCS" id="1003">
    <property type="hits" value="38 hits in 1150 CRISPR screens"/>
</dbReference>
<dbReference type="ChiTaRS" id="CDH5">
    <property type="organism name" value="human"/>
</dbReference>
<dbReference type="GeneWiki" id="VE-cadherin"/>
<dbReference type="GenomeRNAi" id="1003"/>
<dbReference type="Pharos" id="P33151">
    <property type="development level" value="Tbio"/>
</dbReference>
<dbReference type="PRO" id="PR:P33151"/>
<dbReference type="Proteomes" id="UP000005640">
    <property type="component" value="Chromosome 16"/>
</dbReference>
<dbReference type="RNAct" id="P33151">
    <property type="molecule type" value="protein"/>
</dbReference>
<dbReference type="Bgee" id="ENSG00000179776">
    <property type="expression patterns" value="Expressed in right lung and 180 other cell types or tissues"/>
</dbReference>
<dbReference type="ExpressionAtlas" id="P33151">
    <property type="expression patterns" value="baseline and differential"/>
</dbReference>
<dbReference type="GO" id="GO:0005912">
    <property type="term" value="C:adherens junction"/>
    <property type="evidence" value="ECO:0000314"/>
    <property type="project" value="UniProtKB"/>
</dbReference>
<dbReference type="GO" id="GO:0005923">
    <property type="term" value="C:bicellular tight junction"/>
    <property type="evidence" value="ECO:0000318"/>
    <property type="project" value="GO_Central"/>
</dbReference>
<dbReference type="GO" id="GO:0016342">
    <property type="term" value="C:catenin complex"/>
    <property type="evidence" value="ECO:0000318"/>
    <property type="project" value="GO_Central"/>
</dbReference>
<dbReference type="GO" id="GO:0030054">
    <property type="term" value="C:cell junction"/>
    <property type="evidence" value="ECO:0000250"/>
    <property type="project" value="UniProtKB"/>
</dbReference>
<dbReference type="GO" id="GO:0009986">
    <property type="term" value="C:cell surface"/>
    <property type="evidence" value="ECO:0000314"/>
    <property type="project" value="UniProtKB"/>
</dbReference>
<dbReference type="GO" id="GO:0005911">
    <property type="term" value="C:cell-cell junction"/>
    <property type="evidence" value="ECO:0000314"/>
    <property type="project" value="UniProtKB"/>
</dbReference>
<dbReference type="GO" id="GO:0005737">
    <property type="term" value="C:cytoplasm"/>
    <property type="evidence" value="ECO:0000250"/>
    <property type="project" value="UniProtKB"/>
</dbReference>
<dbReference type="GO" id="GO:0009897">
    <property type="term" value="C:external side of plasma membrane"/>
    <property type="evidence" value="ECO:0007669"/>
    <property type="project" value="Ensembl"/>
</dbReference>
<dbReference type="GO" id="GO:0016020">
    <property type="term" value="C:membrane"/>
    <property type="evidence" value="ECO:0000304"/>
    <property type="project" value="ProtInc"/>
</dbReference>
<dbReference type="GO" id="GO:0031965">
    <property type="term" value="C:nuclear membrane"/>
    <property type="evidence" value="ECO:0000314"/>
    <property type="project" value="HPA"/>
</dbReference>
<dbReference type="GO" id="GO:0005654">
    <property type="term" value="C:nucleoplasm"/>
    <property type="evidence" value="ECO:0000314"/>
    <property type="project" value="HPA"/>
</dbReference>
<dbReference type="GO" id="GO:0005886">
    <property type="term" value="C:plasma membrane"/>
    <property type="evidence" value="ECO:0000314"/>
    <property type="project" value="CAFA"/>
</dbReference>
<dbReference type="GO" id="GO:0008013">
    <property type="term" value="F:beta-catenin binding"/>
    <property type="evidence" value="ECO:0000353"/>
    <property type="project" value="BHF-UCL"/>
</dbReference>
<dbReference type="GO" id="GO:0070700">
    <property type="term" value="F:BMP receptor binding"/>
    <property type="evidence" value="ECO:0000353"/>
    <property type="project" value="ARUK-UCL"/>
</dbReference>
<dbReference type="GO" id="GO:0045296">
    <property type="term" value="F:cadherin binding"/>
    <property type="evidence" value="ECO:0000318"/>
    <property type="project" value="GO_Central"/>
</dbReference>
<dbReference type="GO" id="GO:0005509">
    <property type="term" value="F:calcium ion binding"/>
    <property type="evidence" value="ECO:0007669"/>
    <property type="project" value="InterPro"/>
</dbReference>
<dbReference type="GO" id="GO:0098632">
    <property type="term" value="F:cell-cell adhesion mediator activity"/>
    <property type="evidence" value="ECO:0000250"/>
    <property type="project" value="UniProt"/>
</dbReference>
<dbReference type="GO" id="GO:0070051">
    <property type="term" value="F:fibrinogen binding"/>
    <property type="evidence" value="ECO:0000315"/>
    <property type="project" value="ARUK-UCL"/>
</dbReference>
<dbReference type="GO" id="GO:0019903">
    <property type="term" value="F:protein phosphatase binding"/>
    <property type="evidence" value="ECO:0000353"/>
    <property type="project" value="ARUK-UCL"/>
</dbReference>
<dbReference type="GO" id="GO:1990782">
    <property type="term" value="F:protein tyrosine kinase binding"/>
    <property type="evidence" value="ECO:0000353"/>
    <property type="project" value="ARUK-UCL"/>
</dbReference>
<dbReference type="GO" id="GO:0005102">
    <property type="term" value="F:signaling receptor binding"/>
    <property type="evidence" value="ECO:0000353"/>
    <property type="project" value="BHF-UCL"/>
</dbReference>
<dbReference type="GO" id="GO:0030159">
    <property type="term" value="F:signaling receptor complex adaptor activity"/>
    <property type="evidence" value="ECO:0000315"/>
    <property type="project" value="ARUK-UCL"/>
</dbReference>
<dbReference type="GO" id="GO:0044325">
    <property type="term" value="F:transmembrane transporter binding"/>
    <property type="evidence" value="ECO:0000353"/>
    <property type="project" value="BHF-UCL"/>
</dbReference>
<dbReference type="GO" id="GO:0043184">
    <property type="term" value="F:vascular endothelial growth factor receptor 2 binding"/>
    <property type="evidence" value="ECO:0000353"/>
    <property type="project" value="UniProtKB"/>
</dbReference>
<dbReference type="GO" id="GO:0034332">
    <property type="term" value="P:adherens junction organization"/>
    <property type="evidence" value="ECO:0000314"/>
    <property type="project" value="ARUK-UCL"/>
</dbReference>
<dbReference type="GO" id="GO:0070830">
    <property type="term" value="P:bicellular tight junction assembly"/>
    <property type="evidence" value="ECO:0000315"/>
    <property type="project" value="ARUK-UCL"/>
</dbReference>
<dbReference type="GO" id="GO:0043534">
    <property type="term" value="P:blood vessel endothelial cell migration"/>
    <property type="evidence" value="ECO:0000315"/>
    <property type="project" value="ARUK-UCL"/>
</dbReference>
<dbReference type="GO" id="GO:0001955">
    <property type="term" value="P:blood vessel maturation"/>
    <property type="evidence" value="ECO:0007669"/>
    <property type="project" value="Ensembl"/>
</dbReference>
<dbReference type="GO" id="GO:0016339">
    <property type="term" value="P:calcium-dependent cell-cell adhesion via plasma membrane cell adhesion molecules"/>
    <property type="evidence" value="ECO:0000318"/>
    <property type="project" value="GO_Central"/>
</dbReference>
<dbReference type="GO" id="GO:0016477">
    <property type="term" value="P:cell migration"/>
    <property type="evidence" value="ECO:0000318"/>
    <property type="project" value="GO_Central"/>
</dbReference>
<dbReference type="GO" id="GO:0002042">
    <property type="term" value="P:cell migration involved in sprouting angiogenesis"/>
    <property type="evidence" value="ECO:0000250"/>
    <property type="project" value="UniProt"/>
</dbReference>
<dbReference type="GO" id="GO:0000902">
    <property type="term" value="P:cell morphogenesis"/>
    <property type="evidence" value="ECO:0000318"/>
    <property type="project" value="GO_Central"/>
</dbReference>
<dbReference type="GO" id="GO:0007166">
    <property type="term" value="P:cell surface receptor signaling pathway"/>
    <property type="evidence" value="ECO:0000314"/>
    <property type="project" value="ARUK-UCL"/>
</dbReference>
<dbReference type="GO" id="GO:0098609">
    <property type="term" value="P:cell-cell adhesion"/>
    <property type="evidence" value="ECO:0000314"/>
    <property type="project" value="ARUK-UCL"/>
</dbReference>
<dbReference type="GO" id="GO:0044331">
    <property type="term" value="P:cell-cell adhesion mediated by cadherin"/>
    <property type="evidence" value="ECO:0000314"/>
    <property type="project" value="ARUK-UCL"/>
</dbReference>
<dbReference type="GO" id="GO:0007043">
    <property type="term" value="P:cell-cell junction assembly"/>
    <property type="evidence" value="ECO:0000315"/>
    <property type="project" value="UniProtKB"/>
</dbReference>
<dbReference type="GO" id="GO:0001886">
    <property type="term" value="P:endothelial cell morphogenesis"/>
    <property type="evidence" value="ECO:0000250"/>
    <property type="project" value="UniProtKB"/>
</dbReference>
<dbReference type="GO" id="GO:0007156">
    <property type="term" value="P:homophilic cell adhesion via plasma membrane adhesion molecules"/>
    <property type="evidence" value="ECO:0000304"/>
    <property type="project" value="ProtInc"/>
</dbReference>
<dbReference type="GO" id="GO:0006874">
    <property type="term" value="P:intracellular calcium ion homeostasis"/>
    <property type="evidence" value="ECO:0000314"/>
    <property type="project" value="ARUK-UCL"/>
</dbReference>
<dbReference type="GO" id="GO:0035633">
    <property type="term" value="P:maintenance of blood-brain barrier"/>
    <property type="evidence" value="ECO:0000303"/>
    <property type="project" value="ARUK-UCL"/>
</dbReference>
<dbReference type="GO" id="GO:0008285">
    <property type="term" value="P:negative regulation of cell population proliferation"/>
    <property type="evidence" value="ECO:0007669"/>
    <property type="project" value="Ensembl"/>
</dbReference>
<dbReference type="GO" id="GO:2000352">
    <property type="term" value="P:negative regulation of endothelial cell apoptotic process"/>
    <property type="evidence" value="ECO:0000315"/>
    <property type="project" value="ARUK-UCL"/>
</dbReference>
<dbReference type="GO" id="GO:0050728">
    <property type="term" value="P:negative regulation of inflammatory response"/>
    <property type="evidence" value="ECO:0000316"/>
    <property type="project" value="BHF-UCL"/>
</dbReference>
<dbReference type="GO" id="GO:0031115">
    <property type="term" value="P:negative regulation of microtubule polymerization"/>
    <property type="evidence" value="ECO:0000314"/>
    <property type="project" value="ARUK-UCL"/>
</dbReference>
<dbReference type="GO" id="GO:0045766">
    <property type="term" value="P:positive regulation of angiogenesis"/>
    <property type="evidence" value="ECO:0000316"/>
    <property type="project" value="BHF-UCL"/>
</dbReference>
<dbReference type="GO" id="GO:0030513">
    <property type="term" value="P:positive regulation of BMP signaling pathway"/>
    <property type="evidence" value="ECO:0000315"/>
    <property type="project" value="ARUK-UCL"/>
</dbReference>
<dbReference type="GO" id="GO:0030335">
    <property type="term" value="P:positive regulation of cell migration"/>
    <property type="evidence" value="ECO:0000314"/>
    <property type="project" value="ARUK-UCL"/>
</dbReference>
<dbReference type="GO" id="GO:1903142">
    <property type="term" value="P:positive regulation of establishment of endothelial barrier"/>
    <property type="evidence" value="ECO:0000315"/>
    <property type="project" value="UniProtKB"/>
</dbReference>
<dbReference type="GO" id="GO:0010628">
    <property type="term" value="P:positive regulation of gene expression"/>
    <property type="evidence" value="ECO:0000315"/>
    <property type="project" value="ARUK-UCL"/>
</dbReference>
<dbReference type="GO" id="GO:1902533">
    <property type="term" value="P:positive regulation of intracellular signal transduction"/>
    <property type="evidence" value="ECO:0000314"/>
    <property type="project" value="ARUK-UCL"/>
</dbReference>
<dbReference type="GO" id="GO:0031334">
    <property type="term" value="P:positive regulation of protein-containing complex assembly"/>
    <property type="evidence" value="ECO:0000315"/>
    <property type="project" value="ARUK-UCL"/>
</dbReference>
<dbReference type="GO" id="GO:1902396">
    <property type="term" value="P:protein localization to bicellular tight junction"/>
    <property type="evidence" value="ECO:0000315"/>
    <property type="project" value="ARUK-UCL"/>
</dbReference>
<dbReference type="GO" id="GO:2000114">
    <property type="term" value="P:regulation of establishment of cell polarity"/>
    <property type="evidence" value="ECO:0000315"/>
    <property type="project" value="UniProtKB"/>
</dbReference>
<dbReference type="GO" id="GO:0043114">
    <property type="term" value="P:regulation of vascular permeability"/>
    <property type="evidence" value="ECO:0000314"/>
    <property type="project" value="ARUK-UCL"/>
</dbReference>
<dbReference type="GO" id="GO:0007179">
    <property type="term" value="P:transforming growth factor beta receptor signaling pathway"/>
    <property type="evidence" value="ECO:0000314"/>
    <property type="project" value="UniProtKB"/>
</dbReference>
<dbReference type="CDD" id="cd11304">
    <property type="entry name" value="Cadherin_repeat"/>
    <property type="match status" value="5"/>
</dbReference>
<dbReference type="FunFam" id="2.60.40.60:FF:000012">
    <property type="entry name" value="Cadherin 24"/>
    <property type="match status" value="1"/>
</dbReference>
<dbReference type="FunFam" id="2.60.40.60:FF:000017">
    <property type="entry name" value="Cadherin 24"/>
    <property type="match status" value="1"/>
</dbReference>
<dbReference type="FunFam" id="2.60.40.60:FF:000217">
    <property type="entry name" value="Cadherin 5"/>
    <property type="match status" value="1"/>
</dbReference>
<dbReference type="FunFam" id="2.60.40.60:FF:000219">
    <property type="entry name" value="Cadherin 5"/>
    <property type="match status" value="1"/>
</dbReference>
<dbReference type="FunFam" id="4.10.900.10:FF:000008">
    <property type="entry name" value="Cadherin 5"/>
    <property type="match status" value="1"/>
</dbReference>
<dbReference type="FunFam" id="2.60.40.60:FF:000014">
    <property type="entry name" value="Cadherin 8"/>
    <property type="match status" value="1"/>
</dbReference>
<dbReference type="Gene3D" id="2.60.40.60">
    <property type="entry name" value="Cadherins"/>
    <property type="match status" value="5"/>
</dbReference>
<dbReference type="Gene3D" id="4.10.900.10">
    <property type="entry name" value="TCF3-CBD (Catenin binding domain)"/>
    <property type="match status" value="1"/>
</dbReference>
<dbReference type="InterPro" id="IPR039808">
    <property type="entry name" value="Cadherin"/>
</dbReference>
<dbReference type="InterPro" id="IPR002126">
    <property type="entry name" value="Cadherin-like_dom"/>
</dbReference>
<dbReference type="InterPro" id="IPR015919">
    <property type="entry name" value="Cadherin-like_sf"/>
</dbReference>
<dbReference type="InterPro" id="IPR020894">
    <property type="entry name" value="Cadherin_CS"/>
</dbReference>
<dbReference type="InterPro" id="IPR000233">
    <property type="entry name" value="Cadherin_Y-type_LIR"/>
</dbReference>
<dbReference type="InterPro" id="IPR027397">
    <property type="entry name" value="Catenin-bd_sf"/>
</dbReference>
<dbReference type="PANTHER" id="PTHR24027">
    <property type="entry name" value="CADHERIN-23"/>
    <property type="match status" value="1"/>
</dbReference>
<dbReference type="PANTHER" id="PTHR24027:SF89">
    <property type="entry name" value="CADHERIN-5"/>
    <property type="match status" value="1"/>
</dbReference>
<dbReference type="Pfam" id="PF01049">
    <property type="entry name" value="CADH_Y-type_LIR"/>
    <property type="match status" value="1"/>
</dbReference>
<dbReference type="Pfam" id="PF00028">
    <property type="entry name" value="Cadherin"/>
    <property type="match status" value="5"/>
</dbReference>
<dbReference type="PRINTS" id="PR00205">
    <property type="entry name" value="CADHERIN"/>
</dbReference>
<dbReference type="SMART" id="SM00112">
    <property type="entry name" value="CA"/>
    <property type="match status" value="5"/>
</dbReference>
<dbReference type="SUPFAM" id="SSF49313">
    <property type="entry name" value="Cadherin-like"/>
    <property type="match status" value="5"/>
</dbReference>
<dbReference type="PROSITE" id="PS00232">
    <property type="entry name" value="CADHERIN_1"/>
    <property type="match status" value="3"/>
</dbReference>
<dbReference type="PROSITE" id="PS50268">
    <property type="entry name" value="CADHERIN_2"/>
    <property type="match status" value="5"/>
</dbReference>
<sequence>MQRLMMLLATSGACLGLLAVAAVAAAGANPAQRDTHSLLPTHRRQKRDWIWNQMHIDEEKNTSLPHHVGKIKSSVSRKNAKYLLKGEYVGKVFRVDAETGDVFAIERLDRENISEYHLTAVIVDKDTGENLETPSSFTIKVHDVNDNWPVFTHRLFNASVPESSAVGTSVISVTAVDADDPTVGDHASVMYQILKGKEYFAIDNSGRIITITKSLDREKQARYEIVVEARDAQGLRGDSGTATVLVTLQDINDNFPFFTQTKYTFVVPEDTRVGTSVGSLFVEDPDEPQNRMTKYSILRGDYQDAFTIETNPAHNEGIIKPMKPLDYEYIQQYSFIVEATDPTIDLRYMSPPAGNRAQVIINITDVDEPPIFQQPFYHFQLKENQKKPLIGTVLAMDPDAARHSIGYSIRRTSDKGQFFRVTKKGDIYNEKELDREVYPWYNLTVEAKELDSTGTPTGKESIVQVHIEVLDENDNAPEFAKPYQPKVCENAVHGQLVLQISAIDKDITPRNVKFKFILNTENNFTLTDNHDNTANITVKYGQFDREHTKVHFLPVVISDNGMPSRTGTSTLTVAVCKCNEQGEFTFCEDMAAQVGVSIQAVVAILLCILTITVITLLIFLRRRLRKQARAHGKSVPEIHEQLVTYDEEGGGEMDTTSYDVSVLNSVRRGGAKPPRPALDARPSLYAQVQKPPRHAPGAHGGPGEMAAMIEVKKDEADHDGDGPPYDTLHIYGYEGSESIAESLSSLGTDSSDSDVDYDFLNDWGPRFKMLAELYGSDPREELLY</sequence>
<accession>P33151</accession>
<accession>Q4VAI5</accession>
<accession>Q4VAI6</accession>
<feature type="signal peptide" evidence="4">
    <location>
        <begin position="1"/>
        <end position="25"/>
    </location>
</feature>
<feature type="propeptide" id="PRO_0000003755" evidence="4">
    <location>
        <begin position="26"/>
        <end position="47"/>
    </location>
</feature>
<feature type="chain" id="PRO_0000003756" description="Cadherin-5">
    <location>
        <begin position="48"/>
        <end position="784"/>
    </location>
</feature>
<feature type="topological domain" description="Extracellular" evidence="4">
    <location>
        <begin position="48"/>
        <end position="599"/>
    </location>
</feature>
<feature type="transmembrane region" description="Helical" evidence="4">
    <location>
        <begin position="600"/>
        <end position="620"/>
    </location>
</feature>
<feature type="topological domain" description="Cytoplasmic" evidence="4">
    <location>
        <begin position="621"/>
        <end position="784"/>
    </location>
</feature>
<feature type="domain" description="Cadherin 1" evidence="5">
    <location>
        <begin position="48"/>
        <end position="151"/>
    </location>
</feature>
<feature type="domain" description="Cadherin 2" evidence="5">
    <location>
        <begin position="152"/>
        <end position="258"/>
    </location>
</feature>
<feature type="domain" description="Cadherin 3" evidence="5">
    <location>
        <begin position="259"/>
        <end position="372"/>
    </location>
</feature>
<feature type="domain" description="Cadherin 4" evidence="5">
    <location>
        <begin position="373"/>
        <end position="477"/>
    </location>
</feature>
<feature type="domain" description="Cadherin 5" evidence="5">
    <location>
        <begin position="478"/>
        <end position="593"/>
    </location>
</feature>
<feature type="region of interest" description="Required for interaction with PALS1" evidence="2">
    <location>
        <begin position="621"/>
        <end position="660"/>
    </location>
</feature>
<feature type="binding site" evidence="3">
    <location>
        <position position="58"/>
    </location>
    <ligand>
        <name>Ca(2+)</name>
        <dbReference type="ChEBI" id="CHEBI:29108"/>
        <label>1</label>
    </ligand>
</feature>
<feature type="binding site" evidence="3">
    <location>
        <position position="58"/>
    </location>
    <ligand>
        <name>Ca(2+)</name>
        <dbReference type="ChEBI" id="CHEBI:29108"/>
        <label>2</label>
    </ligand>
</feature>
<feature type="binding site" evidence="3">
    <location>
        <position position="59"/>
    </location>
    <ligand>
        <name>Ca(2+)</name>
        <dbReference type="ChEBI" id="CHEBI:29108"/>
        <label>1</label>
    </ligand>
</feature>
<feature type="binding site" evidence="3">
    <location>
        <position position="109"/>
    </location>
    <ligand>
        <name>Ca(2+)</name>
        <dbReference type="ChEBI" id="CHEBI:29108"/>
        <label>1</label>
    </ligand>
</feature>
<feature type="binding site" evidence="3">
    <location>
        <position position="111"/>
    </location>
    <ligand>
        <name>Ca(2+)</name>
        <dbReference type="ChEBI" id="CHEBI:29108"/>
        <label>1</label>
    </ligand>
</feature>
<feature type="binding site" evidence="3">
    <location>
        <position position="111"/>
    </location>
    <ligand>
        <name>Ca(2+)</name>
        <dbReference type="ChEBI" id="CHEBI:29108"/>
        <label>2</label>
    </ligand>
</feature>
<feature type="binding site" evidence="3">
    <location>
        <position position="143"/>
    </location>
    <ligand>
        <name>Ca(2+)</name>
        <dbReference type="ChEBI" id="CHEBI:29108"/>
        <label>2</label>
    </ligand>
</feature>
<feature type="binding site" evidence="3">
    <location>
        <position position="144"/>
    </location>
    <ligand>
        <name>Ca(2+)</name>
        <dbReference type="ChEBI" id="CHEBI:29108"/>
        <label>2</label>
    </ligand>
</feature>
<feature type="binding site" evidence="3">
    <location>
        <position position="145"/>
    </location>
    <ligand>
        <name>Ca(2+)</name>
        <dbReference type="ChEBI" id="CHEBI:29108"/>
        <label>3</label>
    </ligand>
</feature>
<feature type="binding site" evidence="3">
    <location>
        <position position="146"/>
    </location>
    <ligand>
        <name>Ca(2+)</name>
        <dbReference type="ChEBI" id="CHEBI:29108"/>
        <label>1</label>
    </ligand>
</feature>
<feature type="binding site" evidence="3">
    <location>
        <position position="146"/>
    </location>
    <ligand>
        <name>Ca(2+)</name>
        <dbReference type="ChEBI" id="CHEBI:29108"/>
        <label>2</label>
    </ligand>
</feature>
<feature type="binding site" evidence="3">
    <location>
        <position position="147"/>
    </location>
    <ligand>
        <name>Ca(2+)</name>
        <dbReference type="ChEBI" id="CHEBI:29108"/>
        <label>3</label>
    </ligand>
</feature>
<feature type="binding site" evidence="3">
    <location>
        <position position="177"/>
    </location>
    <ligand>
        <name>Ca(2+)</name>
        <dbReference type="ChEBI" id="CHEBI:29108"/>
        <label>3</label>
    </ligand>
</feature>
<feature type="binding site" evidence="3">
    <location>
        <position position="179"/>
    </location>
    <ligand>
        <name>Ca(2+)</name>
        <dbReference type="ChEBI" id="CHEBI:29108"/>
        <label>2</label>
    </ligand>
</feature>
<feature type="binding site" evidence="3">
    <location>
        <position position="179"/>
    </location>
    <ligand>
        <name>Ca(2+)</name>
        <dbReference type="ChEBI" id="CHEBI:29108"/>
        <label>3</label>
    </ligand>
</feature>
<feature type="binding site" evidence="3">
    <location>
        <position position="186"/>
    </location>
    <ligand>
        <name>Ca(2+)</name>
        <dbReference type="ChEBI" id="CHEBI:29108"/>
        <label>3</label>
    </ligand>
</feature>
<feature type="binding site" evidence="3">
    <location>
        <position position="231"/>
    </location>
    <ligand>
        <name>Ca(2+)</name>
        <dbReference type="ChEBI" id="CHEBI:29108"/>
        <label>3</label>
    </ligand>
</feature>
<feature type="glycosylation site" description="N-linked (GlcNAc...) (complex) asparagine" evidence="10 15">
    <location>
        <position position="61"/>
    </location>
</feature>
<feature type="glycosylation site" description="N-linked (GlcNAc...) (complex) asparagine" evidence="9 10 15">
    <location>
        <position position="112"/>
    </location>
</feature>
<feature type="glycosylation site" description="N-linked (GlcNAc...) asparagine" evidence="15">
    <location>
        <position position="157"/>
    </location>
</feature>
<feature type="glycosylation site" description="N-linked (GlcNAc...) asparagine" evidence="15">
    <location>
        <position position="362"/>
    </location>
</feature>
<feature type="glycosylation site" description="N-linked (GlcNAc...) (complex) asparagine" evidence="9 10 15">
    <location>
        <position position="442"/>
    </location>
</feature>
<feature type="glycosylation site" description="N-linked (GlcNAc...) asparagine" evidence="9">
    <location>
        <position position="523"/>
    </location>
</feature>
<feature type="glycosylation site" description="N-linked (GlcNAc...) asparagine" evidence="9">
    <location>
        <position position="535"/>
    </location>
</feature>
<feature type="splice variant" id="VSP_053861" description="In isoform 2." evidence="19">
    <location>
        <begin position="380"/>
        <end position="494"/>
    </location>
</feature>
<feature type="sequence variant" id="VAR_028003" description="In dbSNP:rs16956504.">
    <original>I</original>
    <variation>T</variation>
    <location>
        <position position="503"/>
    </location>
</feature>
<feature type="sequence variant" id="VAR_028004" description="In dbSNP:rs1049970." evidence="6 7 18">
    <original>I</original>
    <variation>T</variation>
    <location>
        <position position="517"/>
    </location>
</feature>
<feature type="sequence conflict" description="In Ref. 4; AAH96363/AAI17521." evidence="22" ref="4">
    <original>V</original>
    <variation>A</variation>
    <location>
        <position position="602"/>
    </location>
</feature>